<comment type="function">
    <text evidence="2">Sulfurates the molybdenum cofactor. Sulfation of molybdenum is essential for xanthine dehydrogenase (XDH) and aldehyde oxidase (ADO) enzymes in which molybdenum cofactor is liganded by 1 oxygen and 1 sulfur atom in active form.</text>
</comment>
<comment type="catalytic activity">
    <reaction evidence="2">
        <text>Mo-molybdopterin + L-cysteine + AH2 = thio-Mo-molybdopterin + L-alanine + A + H2O</text>
        <dbReference type="Rhea" id="RHEA:42636"/>
        <dbReference type="ChEBI" id="CHEBI:13193"/>
        <dbReference type="ChEBI" id="CHEBI:15377"/>
        <dbReference type="ChEBI" id="CHEBI:17499"/>
        <dbReference type="ChEBI" id="CHEBI:35235"/>
        <dbReference type="ChEBI" id="CHEBI:57972"/>
        <dbReference type="ChEBI" id="CHEBI:71302"/>
        <dbReference type="ChEBI" id="CHEBI:82685"/>
        <dbReference type="EC" id="2.8.1.9"/>
    </reaction>
</comment>
<comment type="cofactor">
    <cofactor evidence="2">
        <name>pyridoxal 5'-phosphate</name>
        <dbReference type="ChEBI" id="CHEBI:597326"/>
    </cofactor>
</comment>
<comment type="pathway">
    <text evidence="1">Cofactor biosynthesis; molybdopterin biosynthesis.</text>
</comment>
<comment type="similarity">
    <text evidence="2">Belongs to the class-V pyridoxal-phosphate-dependent aminotransferase family. MOCOS subfamily.</text>
</comment>
<comment type="sequence caution" evidence="4">
    <conflict type="erroneous gene model prediction">
        <sequence resource="EMBL-CDS" id="BAE59154"/>
    </conflict>
</comment>
<evidence type="ECO:0000250" key="1">
    <source>
        <dbReference type="UniProtKB" id="Q96EN8"/>
    </source>
</evidence>
<evidence type="ECO:0000255" key="2">
    <source>
        <dbReference type="HAMAP-Rule" id="MF_03050"/>
    </source>
</evidence>
<evidence type="ECO:0000256" key="3">
    <source>
        <dbReference type="SAM" id="MobiDB-lite"/>
    </source>
</evidence>
<evidence type="ECO:0000305" key="4"/>
<organism>
    <name type="scientific">Aspergillus oryzae (strain ATCC 42149 / RIB 40)</name>
    <name type="common">Yellow koji mold</name>
    <dbReference type="NCBI Taxonomy" id="510516"/>
    <lineage>
        <taxon>Eukaryota</taxon>
        <taxon>Fungi</taxon>
        <taxon>Dikarya</taxon>
        <taxon>Ascomycota</taxon>
        <taxon>Pezizomycotina</taxon>
        <taxon>Eurotiomycetes</taxon>
        <taxon>Eurotiomycetidae</taxon>
        <taxon>Eurotiales</taxon>
        <taxon>Aspergillaceae</taxon>
        <taxon>Aspergillus</taxon>
        <taxon>Aspergillus subgen. Circumdati</taxon>
    </lineage>
</organism>
<keyword id="KW-0501">Molybdenum cofactor biosynthesis</keyword>
<keyword id="KW-0663">Pyridoxal phosphate</keyword>
<keyword id="KW-1185">Reference proteome</keyword>
<keyword id="KW-0808">Transferase</keyword>
<name>MOCOS_ASPOR</name>
<feature type="chain" id="PRO_0000249962" description="Molybdenum cofactor sulfurase">
    <location>
        <begin position="1"/>
        <end position="822"/>
    </location>
</feature>
<feature type="domain" description="MOSC" evidence="2">
    <location>
        <begin position="643"/>
        <end position="820"/>
    </location>
</feature>
<feature type="region of interest" description="Disordered" evidence="3">
    <location>
        <begin position="633"/>
        <end position="666"/>
    </location>
</feature>
<feature type="active site" evidence="2">
    <location>
        <position position="401"/>
    </location>
</feature>
<feature type="modified residue" description="N6-(pyridoxal phosphate)lysine" evidence="2">
    <location>
        <position position="239"/>
    </location>
</feature>
<gene>
    <name evidence="2" type="primary">hxB</name>
    <name type="ORF">AO090023000633</name>
</gene>
<proteinExistence type="inferred from homology"/>
<reference key="1">
    <citation type="journal article" date="2005" name="Nature">
        <title>Genome sequencing and analysis of Aspergillus oryzae.</title>
        <authorList>
            <person name="Machida M."/>
            <person name="Asai K."/>
            <person name="Sano M."/>
            <person name="Tanaka T."/>
            <person name="Kumagai T."/>
            <person name="Terai G."/>
            <person name="Kusumoto K."/>
            <person name="Arima T."/>
            <person name="Akita O."/>
            <person name="Kashiwagi Y."/>
            <person name="Abe K."/>
            <person name="Gomi K."/>
            <person name="Horiuchi H."/>
            <person name="Kitamoto K."/>
            <person name="Kobayashi T."/>
            <person name="Takeuchi M."/>
            <person name="Denning D.W."/>
            <person name="Galagan J.E."/>
            <person name="Nierman W.C."/>
            <person name="Yu J."/>
            <person name="Archer D.B."/>
            <person name="Bennett J.W."/>
            <person name="Bhatnagar D."/>
            <person name="Cleveland T.E."/>
            <person name="Fedorova N.D."/>
            <person name="Gotoh O."/>
            <person name="Horikawa H."/>
            <person name="Hosoyama A."/>
            <person name="Ichinomiya M."/>
            <person name="Igarashi R."/>
            <person name="Iwashita K."/>
            <person name="Juvvadi P.R."/>
            <person name="Kato M."/>
            <person name="Kato Y."/>
            <person name="Kin T."/>
            <person name="Kokubun A."/>
            <person name="Maeda H."/>
            <person name="Maeyama N."/>
            <person name="Maruyama J."/>
            <person name="Nagasaki H."/>
            <person name="Nakajima T."/>
            <person name="Oda K."/>
            <person name="Okada K."/>
            <person name="Paulsen I."/>
            <person name="Sakamoto K."/>
            <person name="Sawano T."/>
            <person name="Takahashi M."/>
            <person name="Takase K."/>
            <person name="Terabayashi Y."/>
            <person name="Wortman J.R."/>
            <person name="Yamada O."/>
            <person name="Yamagata Y."/>
            <person name="Anazawa H."/>
            <person name="Hata Y."/>
            <person name="Koide Y."/>
            <person name="Komori T."/>
            <person name="Koyama Y."/>
            <person name="Minetoki T."/>
            <person name="Suharnan S."/>
            <person name="Tanaka A."/>
            <person name="Isono K."/>
            <person name="Kuhara S."/>
            <person name="Ogasawara N."/>
            <person name="Kikuchi H."/>
        </authorList>
    </citation>
    <scope>NUCLEOTIDE SEQUENCE [LARGE SCALE GENOMIC DNA]</scope>
    <source>
        <strain>ATCC 42149 / RIB 40</strain>
    </source>
</reference>
<dbReference type="EC" id="2.8.1.9" evidence="2"/>
<dbReference type="EMBL" id="BA000051">
    <property type="protein sequence ID" value="BAE59154.1"/>
    <property type="status" value="ALT_SEQ"/>
    <property type="molecule type" value="Genomic_DNA"/>
</dbReference>
<dbReference type="RefSeq" id="XP_001821156.2">
    <property type="nucleotide sequence ID" value="XM_001821104.2"/>
</dbReference>
<dbReference type="SMR" id="Q2UH11"/>
<dbReference type="STRING" id="510516.Q2UH11"/>
<dbReference type="EnsemblFungi" id="BAE59154">
    <property type="protein sequence ID" value="BAE59154"/>
    <property type="gene ID" value="AO090023000633"/>
</dbReference>
<dbReference type="GeneID" id="5993158"/>
<dbReference type="KEGG" id="aor:AO090023000633"/>
<dbReference type="VEuPathDB" id="FungiDB:AO090023000633"/>
<dbReference type="UniPathway" id="UPA00344"/>
<dbReference type="Proteomes" id="UP000006564">
    <property type="component" value="Chromosome 3"/>
</dbReference>
<dbReference type="GO" id="GO:0016829">
    <property type="term" value="F:lyase activity"/>
    <property type="evidence" value="ECO:0007669"/>
    <property type="project" value="UniProtKB-UniRule"/>
</dbReference>
<dbReference type="GO" id="GO:0008265">
    <property type="term" value="F:molybdenum cofactor sulfurtransferase activity"/>
    <property type="evidence" value="ECO:0007669"/>
    <property type="project" value="UniProtKB-UniRule"/>
</dbReference>
<dbReference type="GO" id="GO:0030151">
    <property type="term" value="F:molybdenum ion binding"/>
    <property type="evidence" value="ECO:0007669"/>
    <property type="project" value="UniProtKB-UniRule"/>
</dbReference>
<dbReference type="GO" id="GO:0030170">
    <property type="term" value="F:pyridoxal phosphate binding"/>
    <property type="evidence" value="ECO:0007669"/>
    <property type="project" value="UniProtKB-UniRule"/>
</dbReference>
<dbReference type="GO" id="GO:0006777">
    <property type="term" value="P:Mo-molybdopterin cofactor biosynthetic process"/>
    <property type="evidence" value="ECO:0007669"/>
    <property type="project" value="UniProtKB-UniRule"/>
</dbReference>
<dbReference type="Gene3D" id="3.90.1150.10">
    <property type="entry name" value="Aspartate Aminotransferase, domain 1"/>
    <property type="match status" value="1"/>
</dbReference>
<dbReference type="Gene3D" id="3.40.640.10">
    <property type="entry name" value="Type I PLP-dependent aspartate aminotransferase-like (Major domain)"/>
    <property type="match status" value="1"/>
</dbReference>
<dbReference type="HAMAP" id="MF_03050">
    <property type="entry name" value="MOCOS"/>
    <property type="match status" value="1"/>
</dbReference>
<dbReference type="InterPro" id="IPR000192">
    <property type="entry name" value="Aminotrans_V_dom"/>
</dbReference>
<dbReference type="InterPro" id="IPR005302">
    <property type="entry name" value="MoCF_Sase_C"/>
</dbReference>
<dbReference type="InterPro" id="IPR028886">
    <property type="entry name" value="MoCo_sulfurase"/>
</dbReference>
<dbReference type="InterPro" id="IPR005303">
    <property type="entry name" value="MOCOS_middle"/>
</dbReference>
<dbReference type="InterPro" id="IPR015424">
    <property type="entry name" value="PyrdxlP-dep_Trfase"/>
</dbReference>
<dbReference type="InterPro" id="IPR015421">
    <property type="entry name" value="PyrdxlP-dep_Trfase_major"/>
</dbReference>
<dbReference type="InterPro" id="IPR015422">
    <property type="entry name" value="PyrdxlP-dep_Trfase_small"/>
</dbReference>
<dbReference type="PANTHER" id="PTHR14237:SF19">
    <property type="entry name" value="MITOCHONDRIAL AMIDOXIME REDUCING COMPONENT 1"/>
    <property type="match status" value="1"/>
</dbReference>
<dbReference type="PANTHER" id="PTHR14237">
    <property type="entry name" value="MOLYBDOPTERIN COFACTOR SULFURASE MOSC"/>
    <property type="match status" value="1"/>
</dbReference>
<dbReference type="Pfam" id="PF00266">
    <property type="entry name" value="Aminotran_5"/>
    <property type="match status" value="1"/>
</dbReference>
<dbReference type="Pfam" id="PF03473">
    <property type="entry name" value="MOSC"/>
    <property type="match status" value="1"/>
</dbReference>
<dbReference type="Pfam" id="PF03476">
    <property type="entry name" value="MOSC_N"/>
    <property type="match status" value="1"/>
</dbReference>
<dbReference type="SUPFAM" id="SSF141673">
    <property type="entry name" value="MOSC N-terminal domain-like"/>
    <property type="match status" value="1"/>
</dbReference>
<dbReference type="SUPFAM" id="SSF53383">
    <property type="entry name" value="PLP-dependent transferases"/>
    <property type="match status" value="1"/>
</dbReference>
<dbReference type="PROSITE" id="PS51340">
    <property type="entry name" value="MOSC"/>
    <property type="match status" value="1"/>
</dbReference>
<accession>Q2UH11</accession>
<sequence>MQAKSKTESRAEYCTGYSEDVDVIREREYPFLKDTTYLDHAGTTLYPKSLIDSFARDLTSNLFGNPHSRSSSSQLSTQRIDDIRLRALRFFNADPDEFDLVFVANATAAIKLVVDVFRDSSPQGFWYGYFIDAHTSLVGAREIAERGHRCFLTSGEVERWIADLATDQKNFPRLFAYPGQSNLNGRRSPMQWCKKIRDGSSGAGNVYTLLDAASLVSTSPLDLSDASAAPDFTALSFYKIFGFPDLGALIVRKSAAGIIKKRKFFGGGTVDMVLAQGMPWHAKKSTIHECLEDGTLPFHNIIALDSALSTHGRLFGSMSNVSFHTRYLAKRLHNRLAAMTHFNGQKVCHLYMSPESDFDNSTQGPIIAFNIRNSSGAWIGKSEVERLANVKKIHIRSGSHCNSGGTATSLGWTGPELLRNFSAGLRCGDDHDVMDGRPTGILRVSLGAVSNLRDIDAFARFIDEFYIEKEPEFVSLVPPMEVVLQEPSFYVESLSVYPIKSCGAFKVPDGQRWEIKREGLAWDREWCLIHQGTGAALSMKKYPRMALIRPVIDLERGVLRITCGSDSKELEVSLRREITNLVTTSLCQSAKSSNVCGDRVVVQAYSSPTVASFFSNFLGVPCTLARFPPQISTRISNPTRSSRRSQRALMPGSFPEDPSPTSEQPPILLSNESPILLISRSSVNRLNENIKYNPRPSYSTPAKAVEADVFRANIVVAENLHQLANAERPYIEDTWESFSVGPEQLCFDVLGSCQRCQMVCVDPYTGTRREEPYSTLVKTRKINSKIVFGRHTSLSNMELSQGAGKPKSCTVMVGDVVTPQIA</sequence>
<protein>
    <recommendedName>
        <fullName evidence="2">Molybdenum cofactor sulfurase</fullName>
        <shortName evidence="2">MCS</shortName>
        <shortName evidence="2">MOS</shortName>
        <shortName evidence="2">MoCo sulfurase</shortName>
        <ecNumber evidence="2">2.8.1.9</ecNumber>
    </recommendedName>
    <alternativeName>
        <fullName evidence="2">Molybdenum cofactor sulfurtransferase</fullName>
    </alternativeName>
</protein>